<organism>
    <name type="scientific">Actinobacillus pleuropneumoniae serotype 3 (strain JL03)</name>
    <dbReference type="NCBI Taxonomy" id="434271"/>
    <lineage>
        <taxon>Bacteria</taxon>
        <taxon>Pseudomonadati</taxon>
        <taxon>Pseudomonadota</taxon>
        <taxon>Gammaproteobacteria</taxon>
        <taxon>Pasteurellales</taxon>
        <taxon>Pasteurellaceae</taxon>
        <taxon>Actinobacillus</taxon>
    </lineage>
</organism>
<sequence>MNTNKIGVLLANLGTPDEPTTPAVKRYLKQFLSDPRVIDLPKFKWQFILNYMILSKRSPKVAKLYREIWTEQGSPLLAISRQQQQALQDYFNRQNQNVLVELGMSYGNPSIESATDRLIKAGVSKIIVLPLYPQYSSTTTASVLDAFARGLTQQRNIVPFEFIHSYHNDPLYIQALANTIQLAEDEKLLFSFHGIPKRYQTEGDFYPEHCQQTAQLVADKLSLTDEQWLVTYQSRFGDEEWLQPYTDETLETLPSQGVKKIAVICAGFSADCLETLEEIAEENKENFLNAGGQSYRYIPALNANTDHINALAKLIEAKI</sequence>
<gene>
    <name evidence="1" type="primary">hemH</name>
    <name type="ordered locus">APJL_1983</name>
</gene>
<protein>
    <recommendedName>
        <fullName evidence="1">Ferrochelatase</fullName>
        <ecNumber evidence="1">4.98.1.1</ecNumber>
    </recommendedName>
    <alternativeName>
        <fullName evidence="1">Heme synthase</fullName>
    </alternativeName>
    <alternativeName>
        <fullName evidence="1">Protoheme ferro-lyase</fullName>
    </alternativeName>
</protein>
<accession>B0BTL7</accession>
<proteinExistence type="inferred from homology"/>
<evidence type="ECO:0000255" key="1">
    <source>
        <dbReference type="HAMAP-Rule" id="MF_00323"/>
    </source>
</evidence>
<keyword id="KW-0963">Cytoplasm</keyword>
<keyword id="KW-0350">Heme biosynthesis</keyword>
<keyword id="KW-0408">Iron</keyword>
<keyword id="KW-0456">Lyase</keyword>
<keyword id="KW-0479">Metal-binding</keyword>
<keyword id="KW-0627">Porphyrin biosynthesis</keyword>
<comment type="function">
    <text evidence="1">Catalyzes the ferrous insertion into protoporphyrin IX.</text>
</comment>
<comment type="catalytic activity">
    <reaction evidence="1">
        <text>heme b + 2 H(+) = protoporphyrin IX + Fe(2+)</text>
        <dbReference type="Rhea" id="RHEA:22584"/>
        <dbReference type="ChEBI" id="CHEBI:15378"/>
        <dbReference type="ChEBI" id="CHEBI:29033"/>
        <dbReference type="ChEBI" id="CHEBI:57306"/>
        <dbReference type="ChEBI" id="CHEBI:60344"/>
        <dbReference type="EC" id="4.98.1.1"/>
    </reaction>
</comment>
<comment type="pathway">
    <text evidence="1">Porphyrin-containing compound metabolism; protoheme biosynthesis; protoheme from protoporphyrin-IX: step 1/1.</text>
</comment>
<comment type="subcellular location">
    <subcellularLocation>
        <location evidence="1">Cytoplasm</location>
    </subcellularLocation>
</comment>
<comment type="similarity">
    <text evidence="1">Belongs to the ferrochelatase family.</text>
</comment>
<reference key="1">
    <citation type="journal article" date="2008" name="PLoS ONE">
        <title>Genome biology of Actinobacillus pleuropneumoniae JL03, an isolate of serotype 3 prevalent in China.</title>
        <authorList>
            <person name="Xu Z."/>
            <person name="Zhou Y."/>
            <person name="Li L."/>
            <person name="Zhou R."/>
            <person name="Xiao S."/>
            <person name="Wan Y."/>
            <person name="Zhang S."/>
            <person name="Wang K."/>
            <person name="Li W."/>
            <person name="Li L."/>
            <person name="Jin H."/>
            <person name="Kang M."/>
            <person name="Dalai B."/>
            <person name="Li T."/>
            <person name="Liu L."/>
            <person name="Cheng Y."/>
            <person name="Zhang L."/>
            <person name="Xu T."/>
            <person name="Zheng H."/>
            <person name="Pu S."/>
            <person name="Wang B."/>
            <person name="Gu W."/>
            <person name="Zhang X.L."/>
            <person name="Zhu G.-F."/>
            <person name="Wang S."/>
            <person name="Zhao G.-P."/>
            <person name="Chen H."/>
        </authorList>
    </citation>
    <scope>NUCLEOTIDE SEQUENCE [LARGE SCALE GENOMIC DNA]</scope>
    <source>
        <strain>JL03</strain>
    </source>
</reference>
<feature type="chain" id="PRO_1000116027" description="Ferrochelatase">
    <location>
        <begin position="1"/>
        <end position="319"/>
    </location>
</feature>
<feature type="binding site" evidence="1">
    <location>
        <position position="193"/>
    </location>
    <ligand>
        <name>Fe cation</name>
        <dbReference type="ChEBI" id="CHEBI:24875"/>
    </ligand>
</feature>
<feature type="binding site" evidence="1">
    <location>
        <position position="274"/>
    </location>
    <ligand>
        <name>Fe cation</name>
        <dbReference type="ChEBI" id="CHEBI:24875"/>
    </ligand>
</feature>
<dbReference type="EC" id="4.98.1.1" evidence="1"/>
<dbReference type="EMBL" id="CP000687">
    <property type="protein sequence ID" value="ABY70531.1"/>
    <property type="molecule type" value="Genomic_DNA"/>
</dbReference>
<dbReference type="RefSeq" id="WP_012263456.1">
    <property type="nucleotide sequence ID" value="NC_010278.1"/>
</dbReference>
<dbReference type="SMR" id="B0BTL7"/>
<dbReference type="KEGG" id="apj:APJL_1983"/>
<dbReference type="HOGENOM" id="CLU_018884_0_0_6"/>
<dbReference type="UniPathway" id="UPA00252">
    <property type="reaction ID" value="UER00325"/>
</dbReference>
<dbReference type="Proteomes" id="UP000008547">
    <property type="component" value="Chromosome"/>
</dbReference>
<dbReference type="GO" id="GO:0005737">
    <property type="term" value="C:cytoplasm"/>
    <property type="evidence" value="ECO:0007669"/>
    <property type="project" value="UniProtKB-SubCell"/>
</dbReference>
<dbReference type="GO" id="GO:0004325">
    <property type="term" value="F:ferrochelatase activity"/>
    <property type="evidence" value="ECO:0007669"/>
    <property type="project" value="UniProtKB-UniRule"/>
</dbReference>
<dbReference type="GO" id="GO:0046872">
    <property type="term" value="F:metal ion binding"/>
    <property type="evidence" value="ECO:0007669"/>
    <property type="project" value="UniProtKB-KW"/>
</dbReference>
<dbReference type="GO" id="GO:0006783">
    <property type="term" value="P:heme biosynthetic process"/>
    <property type="evidence" value="ECO:0007669"/>
    <property type="project" value="UniProtKB-UniRule"/>
</dbReference>
<dbReference type="CDD" id="cd00419">
    <property type="entry name" value="Ferrochelatase_C"/>
    <property type="match status" value="1"/>
</dbReference>
<dbReference type="CDD" id="cd03411">
    <property type="entry name" value="Ferrochelatase_N"/>
    <property type="match status" value="1"/>
</dbReference>
<dbReference type="FunFam" id="3.40.50.1400:FF:000002">
    <property type="entry name" value="Ferrochelatase"/>
    <property type="match status" value="1"/>
</dbReference>
<dbReference type="Gene3D" id="3.40.50.1400">
    <property type="match status" value="2"/>
</dbReference>
<dbReference type="HAMAP" id="MF_00323">
    <property type="entry name" value="Ferrochelatase"/>
    <property type="match status" value="1"/>
</dbReference>
<dbReference type="InterPro" id="IPR001015">
    <property type="entry name" value="Ferrochelatase"/>
</dbReference>
<dbReference type="InterPro" id="IPR019772">
    <property type="entry name" value="Ferrochelatase_AS"/>
</dbReference>
<dbReference type="InterPro" id="IPR033644">
    <property type="entry name" value="Ferrochelatase_C"/>
</dbReference>
<dbReference type="InterPro" id="IPR033659">
    <property type="entry name" value="Ferrochelatase_N"/>
</dbReference>
<dbReference type="NCBIfam" id="TIGR00109">
    <property type="entry name" value="hemH"/>
    <property type="match status" value="1"/>
</dbReference>
<dbReference type="PANTHER" id="PTHR11108">
    <property type="entry name" value="FERROCHELATASE"/>
    <property type="match status" value="1"/>
</dbReference>
<dbReference type="PANTHER" id="PTHR11108:SF1">
    <property type="entry name" value="FERROCHELATASE, MITOCHONDRIAL"/>
    <property type="match status" value="1"/>
</dbReference>
<dbReference type="Pfam" id="PF00762">
    <property type="entry name" value="Ferrochelatase"/>
    <property type="match status" value="1"/>
</dbReference>
<dbReference type="SUPFAM" id="SSF53800">
    <property type="entry name" value="Chelatase"/>
    <property type="match status" value="1"/>
</dbReference>
<dbReference type="PROSITE" id="PS00534">
    <property type="entry name" value="FERROCHELATASE"/>
    <property type="match status" value="1"/>
</dbReference>
<name>HEMH_ACTPJ</name>